<feature type="chain" id="PRO_0000368450" description="ATP synthase subunit b">
    <location>
        <begin position="1"/>
        <end position="167"/>
    </location>
</feature>
<feature type="transmembrane region" description="Helical" evidence="1">
    <location>
        <begin position="15"/>
        <end position="37"/>
    </location>
</feature>
<dbReference type="EMBL" id="CP000383">
    <property type="protein sequence ID" value="ABG57473.1"/>
    <property type="molecule type" value="Genomic_DNA"/>
</dbReference>
<dbReference type="RefSeq" id="WP_011583589.1">
    <property type="nucleotide sequence ID" value="NC_008255.1"/>
</dbReference>
<dbReference type="SMR" id="Q11YP3"/>
<dbReference type="STRING" id="269798.CHU_0181"/>
<dbReference type="KEGG" id="chu:CHU_0181"/>
<dbReference type="eggNOG" id="COG0711">
    <property type="taxonomic scope" value="Bacteria"/>
</dbReference>
<dbReference type="HOGENOM" id="CLU_079215_4_1_10"/>
<dbReference type="OrthoDB" id="9795289at2"/>
<dbReference type="Proteomes" id="UP000001822">
    <property type="component" value="Chromosome"/>
</dbReference>
<dbReference type="GO" id="GO:0005886">
    <property type="term" value="C:plasma membrane"/>
    <property type="evidence" value="ECO:0007669"/>
    <property type="project" value="UniProtKB-SubCell"/>
</dbReference>
<dbReference type="GO" id="GO:0045259">
    <property type="term" value="C:proton-transporting ATP synthase complex"/>
    <property type="evidence" value="ECO:0007669"/>
    <property type="project" value="UniProtKB-KW"/>
</dbReference>
<dbReference type="GO" id="GO:0046933">
    <property type="term" value="F:proton-transporting ATP synthase activity, rotational mechanism"/>
    <property type="evidence" value="ECO:0007669"/>
    <property type="project" value="UniProtKB-UniRule"/>
</dbReference>
<dbReference type="GO" id="GO:0046961">
    <property type="term" value="F:proton-transporting ATPase activity, rotational mechanism"/>
    <property type="evidence" value="ECO:0007669"/>
    <property type="project" value="TreeGrafter"/>
</dbReference>
<dbReference type="CDD" id="cd06503">
    <property type="entry name" value="ATP-synt_Fo_b"/>
    <property type="match status" value="1"/>
</dbReference>
<dbReference type="Gene3D" id="1.20.5.620">
    <property type="entry name" value="F1F0 ATP synthase subunit B, membrane domain"/>
    <property type="match status" value="1"/>
</dbReference>
<dbReference type="HAMAP" id="MF_01398">
    <property type="entry name" value="ATP_synth_b_bprime"/>
    <property type="match status" value="1"/>
</dbReference>
<dbReference type="InterPro" id="IPR028987">
    <property type="entry name" value="ATP_synth_B-like_membr_sf"/>
</dbReference>
<dbReference type="InterPro" id="IPR002146">
    <property type="entry name" value="ATP_synth_b/b'su_bac/chlpt"/>
</dbReference>
<dbReference type="InterPro" id="IPR005864">
    <property type="entry name" value="ATP_synth_F0_bsu_bac"/>
</dbReference>
<dbReference type="InterPro" id="IPR050059">
    <property type="entry name" value="ATP_synthase_B_chain"/>
</dbReference>
<dbReference type="NCBIfam" id="TIGR01144">
    <property type="entry name" value="ATP_synt_b"/>
    <property type="match status" value="1"/>
</dbReference>
<dbReference type="NCBIfam" id="NF011041">
    <property type="entry name" value="PRK14471.1"/>
    <property type="match status" value="1"/>
</dbReference>
<dbReference type="PANTHER" id="PTHR33445:SF1">
    <property type="entry name" value="ATP SYNTHASE SUBUNIT B"/>
    <property type="match status" value="1"/>
</dbReference>
<dbReference type="PANTHER" id="PTHR33445">
    <property type="entry name" value="ATP SYNTHASE SUBUNIT B', CHLOROPLASTIC"/>
    <property type="match status" value="1"/>
</dbReference>
<dbReference type="Pfam" id="PF00430">
    <property type="entry name" value="ATP-synt_B"/>
    <property type="match status" value="1"/>
</dbReference>
<dbReference type="SUPFAM" id="SSF81573">
    <property type="entry name" value="F1F0 ATP synthase subunit B, membrane domain"/>
    <property type="match status" value="1"/>
</dbReference>
<protein>
    <recommendedName>
        <fullName evidence="1">ATP synthase subunit b</fullName>
    </recommendedName>
    <alternativeName>
        <fullName evidence="1">ATP synthase F(0) sector subunit b</fullName>
    </alternativeName>
    <alternativeName>
        <fullName evidence="1">ATPase subunit I</fullName>
    </alternativeName>
    <alternativeName>
        <fullName evidence="1">F-type ATPase subunit b</fullName>
        <shortName evidence="1">F-ATPase subunit b</shortName>
    </alternativeName>
</protein>
<name>ATPF_CYTH3</name>
<reference key="1">
    <citation type="journal article" date="2007" name="Appl. Environ. Microbiol.">
        <title>Genome sequence of the cellulolytic gliding bacterium Cytophaga hutchinsonii.</title>
        <authorList>
            <person name="Xie G."/>
            <person name="Bruce D.C."/>
            <person name="Challacombe J.F."/>
            <person name="Chertkov O."/>
            <person name="Detter J.C."/>
            <person name="Gilna P."/>
            <person name="Han C.S."/>
            <person name="Lucas S."/>
            <person name="Misra M."/>
            <person name="Myers G.L."/>
            <person name="Richardson P."/>
            <person name="Tapia R."/>
            <person name="Thayer N."/>
            <person name="Thompson L.S."/>
            <person name="Brettin T.S."/>
            <person name="Henrissat B."/>
            <person name="Wilson D.B."/>
            <person name="McBride M.J."/>
        </authorList>
    </citation>
    <scope>NUCLEOTIDE SEQUENCE [LARGE SCALE GENOMIC DNA]</scope>
    <source>
        <strain>ATCC 33406 / DSM 1761 / JCM 20678 / CIP 103989 / IAM 12607 / NBRC 15051 / NCIMB 9469 / D465</strain>
    </source>
</reference>
<comment type="function">
    <text evidence="1">F(1)F(0) ATP synthase produces ATP from ADP in the presence of a proton or sodium gradient. F-type ATPases consist of two structural domains, F(1) containing the extramembraneous catalytic core and F(0) containing the membrane proton channel, linked together by a central stalk and a peripheral stalk. During catalysis, ATP synthesis in the catalytic domain of F(1) is coupled via a rotary mechanism of the central stalk subunits to proton translocation.</text>
</comment>
<comment type="function">
    <text evidence="1">Component of the F(0) channel, it forms part of the peripheral stalk, linking F(1) to F(0).</text>
</comment>
<comment type="subunit">
    <text evidence="1">F-type ATPases have 2 components, F(1) - the catalytic core - and F(0) - the membrane proton channel. F(1) has five subunits: alpha(3), beta(3), gamma(1), delta(1), epsilon(1). F(0) has three main subunits: a(1), b(2) and c(10-14). The alpha and beta chains form an alternating ring which encloses part of the gamma chain. F(1) is attached to F(0) by a central stalk formed by the gamma and epsilon chains, while a peripheral stalk is formed by the delta and b chains.</text>
</comment>
<comment type="subcellular location">
    <subcellularLocation>
        <location evidence="1">Cell inner membrane</location>
        <topology evidence="1">Single-pass membrane protein</topology>
    </subcellularLocation>
</comment>
<comment type="similarity">
    <text evidence="1">Belongs to the ATPase B chain family.</text>
</comment>
<sequence length="167" mass="18657">MALLSLITPDFGLFFWQTVIFLVTLYLLSKFAWGPIMSAMKEREDSITDALSAADKARADIEKLQATNEALLAEARIERDKILADAHKAATTMMEDAKVKASTEGNRLMEAARVSIQTEKNAALHEVKNYAATLAVEIAEKILRKELNNAEEQKKLVSEYIKEVNLN</sequence>
<keyword id="KW-0066">ATP synthesis</keyword>
<keyword id="KW-0997">Cell inner membrane</keyword>
<keyword id="KW-1003">Cell membrane</keyword>
<keyword id="KW-0138">CF(0)</keyword>
<keyword id="KW-0375">Hydrogen ion transport</keyword>
<keyword id="KW-0406">Ion transport</keyword>
<keyword id="KW-0472">Membrane</keyword>
<keyword id="KW-1185">Reference proteome</keyword>
<keyword id="KW-0812">Transmembrane</keyword>
<keyword id="KW-1133">Transmembrane helix</keyword>
<keyword id="KW-0813">Transport</keyword>
<gene>
    <name evidence="1" type="primary">atpF</name>
    <name type="ordered locus">CHU_0181</name>
</gene>
<evidence type="ECO:0000255" key="1">
    <source>
        <dbReference type="HAMAP-Rule" id="MF_01398"/>
    </source>
</evidence>
<organism>
    <name type="scientific">Cytophaga hutchinsonii (strain ATCC 33406 / DSM 1761 / CIP 103989 / NBRC 15051 / NCIMB 9469 / D465)</name>
    <dbReference type="NCBI Taxonomy" id="269798"/>
    <lineage>
        <taxon>Bacteria</taxon>
        <taxon>Pseudomonadati</taxon>
        <taxon>Bacteroidota</taxon>
        <taxon>Cytophagia</taxon>
        <taxon>Cytophagales</taxon>
        <taxon>Cytophagaceae</taxon>
        <taxon>Cytophaga</taxon>
    </lineage>
</organism>
<accession>Q11YP3</accession>
<proteinExistence type="inferred from homology"/>